<sequence length="151" mass="15648">MKLILTADVDNLGAPGDTVEVKDGYGRNYLLPRGLAIVATRGAEKQVEGIRRAQEARAVRGLDHAKELKAAIEGLESVTLTVKTAGGSGKLFGSVTVADVAAAIKAAGGPIVDKRSIVLPKAHIKNTGKHAVVVNLHPDVVAKFNLNVVGA</sequence>
<comment type="function">
    <text evidence="1">Binds to the 23S rRNA.</text>
</comment>
<comment type="similarity">
    <text evidence="1">Belongs to the bacterial ribosomal protein bL9 family.</text>
</comment>
<organism>
    <name type="scientific">Rhodococcus erythropolis (strain PR4 / NBRC 100887)</name>
    <dbReference type="NCBI Taxonomy" id="234621"/>
    <lineage>
        <taxon>Bacteria</taxon>
        <taxon>Bacillati</taxon>
        <taxon>Actinomycetota</taxon>
        <taxon>Actinomycetes</taxon>
        <taxon>Mycobacteriales</taxon>
        <taxon>Nocardiaceae</taxon>
        <taxon>Rhodococcus</taxon>
        <taxon>Rhodococcus erythropolis group</taxon>
    </lineage>
</organism>
<name>RL9_RHOE4</name>
<accession>C0ZV42</accession>
<evidence type="ECO:0000255" key="1">
    <source>
        <dbReference type="HAMAP-Rule" id="MF_00503"/>
    </source>
</evidence>
<evidence type="ECO:0000305" key="2"/>
<gene>
    <name evidence="1" type="primary">rplI</name>
    <name type="ordered locus">RER_58280</name>
</gene>
<protein>
    <recommendedName>
        <fullName evidence="1">Large ribosomal subunit protein bL9</fullName>
    </recommendedName>
    <alternativeName>
        <fullName evidence="2">50S ribosomal protein L9</fullName>
    </alternativeName>
</protein>
<proteinExistence type="inferred from homology"/>
<dbReference type="EMBL" id="AP008957">
    <property type="protein sequence ID" value="BAH36536.1"/>
    <property type="molecule type" value="Genomic_DNA"/>
</dbReference>
<dbReference type="RefSeq" id="WP_003941243.1">
    <property type="nucleotide sequence ID" value="NC_012490.1"/>
</dbReference>
<dbReference type="SMR" id="C0ZV42"/>
<dbReference type="KEGG" id="rer:RER_58280"/>
<dbReference type="eggNOG" id="COG0359">
    <property type="taxonomic scope" value="Bacteria"/>
</dbReference>
<dbReference type="HOGENOM" id="CLU_078938_5_1_11"/>
<dbReference type="Proteomes" id="UP000002204">
    <property type="component" value="Chromosome"/>
</dbReference>
<dbReference type="GO" id="GO:1990904">
    <property type="term" value="C:ribonucleoprotein complex"/>
    <property type="evidence" value="ECO:0007669"/>
    <property type="project" value="UniProtKB-KW"/>
</dbReference>
<dbReference type="GO" id="GO:0005840">
    <property type="term" value="C:ribosome"/>
    <property type="evidence" value="ECO:0007669"/>
    <property type="project" value="UniProtKB-KW"/>
</dbReference>
<dbReference type="GO" id="GO:0019843">
    <property type="term" value="F:rRNA binding"/>
    <property type="evidence" value="ECO:0007669"/>
    <property type="project" value="UniProtKB-UniRule"/>
</dbReference>
<dbReference type="GO" id="GO:0003735">
    <property type="term" value="F:structural constituent of ribosome"/>
    <property type="evidence" value="ECO:0007669"/>
    <property type="project" value="InterPro"/>
</dbReference>
<dbReference type="GO" id="GO:0006412">
    <property type="term" value="P:translation"/>
    <property type="evidence" value="ECO:0007669"/>
    <property type="project" value="UniProtKB-UniRule"/>
</dbReference>
<dbReference type="FunFam" id="3.40.5.10:FF:000003">
    <property type="entry name" value="50S ribosomal protein L9"/>
    <property type="match status" value="1"/>
</dbReference>
<dbReference type="Gene3D" id="3.10.430.100">
    <property type="entry name" value="Ribosomal protein L9, C-terminal domain"/>
    <property type="match status" value="1"/>
</dbReference>
<dbReference type="Gene3D" id="3.40.5.10">
    <property type="entry name" value="Ribosomal protein L9, N-terminal domain"/>
    <property type="match status" value="1"/>
</dbReference>
<dbReference type="HAMAP" id="MF_00503">
    <property type="entry name" value="Ribosomal_bL9"/>
    <property type="match status" value="1"/>
</dbReference>
<dbReference type="InterPro" id="IPR000244">
    <property type="entry name" value="Ribosomal_bL9"/>
</dbReference>
<dbReference type="InterPro" id="IPR009027">
    <property type="entry name" value="Ribosomal_bL9/RNase_H1_N"/>
</dbReference>
<dbReference type="InterPro" id="IPR020594">
    <property type="entry name" value="Ribosomal_bL9_bac/chp"/>
</dbReference>
<dbReference type="InterPro" id="IPR020069">
    <property type="entry name" value="Ribosomal_bL9_C"/>
</dbReference>
<dbReference type="InterPro" id="IPR036791">
    <property type="entry name" value="Ribosomal_bL9_C_sf"/>
</dbReference>
<dbReference type="InterPro" id="IPR020070">
    <property type="entry name" value="Ribosomal_bL9_N"/>
</dbReference>
<dbReference type="InterPro" id="IPR036935">
    <property type="entry name" value="Ribosomal_bL9_N_sf"/>
</dbReference>
<dbReference type="NCBIfam" id="TIGR00158">
    <property type="entry name" value="L9"/>
    <property type="match status" value="1"/>
</dbReference>
<dbReference type="PANTHER" id="PTHR21368">
    <property type="entry name" value="50S RIBOSOMAL PROTEIN L9"/>
    <property type="match status" value="1"/>
</dbReference>
<dbReference type="Pfam" id="PF03948">
    <property type="entry name" value="Ribosomal_L9_C"/>
    <property type="match status" value="1"/>
</dbReference>
<dbReference type="Pfam" id="PF01281">
    <property type="entry name" value="Ribosomal_L9_N"/>
    <property type="match status" value="1"/>
</dbReference>
<dbReference type="SUPFAM" id="SSF55658">
    <property type="entry name" value="L9 N-domain-like"/>
    <property type="match status" value="1"/>
</dbReference>
<dbReference type="SUPFAM" id="SSF55653">
    <property type="entry name" value="Ribosomal protein L9 C-domain"/>
    <property type="match status" value="1"/>
</dbReference>
<dbReference type="PROSITE" id="PS00651">
    <property type="entry name" value="RIBOSOMAL_L9"/>
    <property type="match status" value="1"/>
</dbReference>
<reference key="1">
    <citation type="submission" date="2005-03" db="EMBL/GenBank/DDBJ databases">
        <title>Comparison of the complete genome sequences of Rhodococcus erythropolis PR4 and Rhodococcus opacus B4.</title>
        <authorList>
            <person name="Takarada H."/>
            <person name="Sekine M."/>
            <person name="Hosoyama A."/>
            <person name="Yamada R."/>
            <person name="Fujisawa T."/>
            <person name="Omata S."/>
            <person name="Shimizu A."/>
            <person name="Tsukatani N."/>
            <person name="Tanikawa S."/>
            <person name="Fujita N."/>
            <person name="Harayama S."/>
        </authorList>
    </citation>
    <scope>NUCLEOTIDE SEQUENCE [LARGE SCALE GENOMIC DNA]</scope>
    <source>
        <strain>PR4 / NBRC 100887</strain>
    </source>
</reference>
<feature type="chain" id="PRO_1000206559" description="Large ribosomal subunit protein bL9">
    <location>
        <begin position="1"/>
        <end position="151"/>
    </location>
</feature>
<keyword id="KW-0687">Ribonucleoprotein</keyword>
<keyword id="KW-0689">Ribosomal protein</keyword>
<keyword id="KW-0694">RNA-binding</keyword>
<keyword id="KW-0699">rRNA-binding</keyword>